<keyword id="KW-0175">Coiled coil</keyword>
<keyword id="KW-0472">Membrane</keyword>
<keyword id="KW-0496">Mitochondrion</keyword>
<keyword id="KW-0812">Transmembrane</keyword>
<keyword id="KW-1133">Transmembrane helix</keyword>
<gene>
    <name type="primary">RCF1</name>
    <name type="synonym">AIM31</name>
    <name type="ORF">BDCG_03143</name>
</gene>
<sequence>MPNIDNTPLPSSFDAHPEFFQETKWQKVTRRLKEEPLIPIGYAATSYALWRAYKSMKARDSVELNRMFRARIYGHAFTLFAIVAGGIYYGQERKQRKEFEKALQEKQDQEKRDAWLRELEVRDKEDKDWRQRHAAMEMAAKEAEKKMG</sequence>
<evidence type="ECO:0000250" key="1"/>
<evidence type="ECO:0000255" key="2"/>
<evidence type="ECO:0000255" key="3">
    <source>
        <dbReference type="PROSITE-ProRule" id="PRU00836"/>
    </source>
</evidence>
<evidence type="ECO:0000305" key="4"/>
<protein>
    <recommendedName>
        <fullName>Respiratory supercomplex factor 1, mitochondrial</fullName>
    </recommendedName>
</protein>
<organism>
    <name type="scientific">Ajellomyces dermatitidis (strain ER-3 / ATCC MYA-2586)</name>
    <name type="common">Blastomyces dermatitidis</name>
    <dbReference type="NCBI Taxonomy" id="559297"/>
    <lineage>
        <taxon>Eukaryota</taxon>
        <taxon>Fungi</taxon>
        <taxon>Dikarya</taxon>
        <taxon>Ascomycota</taxon>
        <taxon>Pezizomycotina</taxon>
        <taxon>Eurotiomycetes</taxon>
        <taxon>Eurotiomycetidae</taxon>
        <taxon>Onygenales</taxon>
        <taxon>Ajellomycetaceae</taxon>
        <taxon>Blastomyces</taxon>
    </lineage>
</organism>
<name>RCF1_AJEDR</name>
<feature type="chain" id="PRO_0000399612" description="Respiratory supercomplex factor 1, mitochondrial">
    <location>
        <begin position="1"/>
        <end position="148"/>
    </location>
</feature>
<feature type="transmembrane region" description="Helical" evidence="3">
    <location>
        <begin position="36"/>
        <end position="53"/>
    </location>
</feature>
<feature type="transmembrane region" description="Helical" evidence="3">
    <location>
        <begin position="72"/>
        <end position="89"/>
    </location>
</feature>
<feature type="domain" description="HIG1" evidence="3">
    <location>
        <begin position="9"/>
        <end position="100"/>
    </location>
</feature>
<feature type="coiled-coil region" evidence="2">
    <location>
        <begin position="89"/>
        <end position="148"/>
    </location>
</feature>
<proteinExistence type="inferred from homology"/>
<accession>C5GDJ2</accession>
<dbReference type="EMBL" id="EQ999975">
    <property type="protein sequence ID" value="EEQ88023.1"/>
    <property type="molecule type" value="Genomic_DNA"/>
</dbReference>
<dbReference type="SMR" id="C5GDJ2"/>
<dbReference type="STRING" id="559297.C5GDJ2"/>
<dbReference type="VEuPathDB" id="FungiDB:BDCG_03143"/>
<dbReference type="eggNOG" id="KOG4431">
    <property type="taxonomic scope" value="Eukaryota"/>
</dbReference>
<dbReference type="HOGENOM" id="CLU_087356_0_2_1"/>
<dbReference type="OMA" id="QRWIREL"/>
<dbReference type="GO" id="GO:0031966">
    <property type="term" value="C:mitochondrial membrane"/>
    <property type="evidence" value="ECO:0007669"/>
    <property type="project" value="UniProtKB-SubCell"/>
</dbReference>
<dbReference type="GO" id="GO:0097250">
    <property type="term" value="P:mitochondrial respirasome assembly"/>
    <property type="evidence" value="ECO:0007669"/>
    <property type="project" value="TreeGrafter"/>
</dbReference>
<dbReference type="InterPro" id="IPR007667">
    <property type="entry name" value="Hypoxia_induced_domain"/>
</dbReference>
<dbReference type="InterPro" id="IPR050355">
    <property type="entry name" value="RCF1"/>
</dbReference>
<dbReference type="PANTHER" id="PTHR12297:SF3">
    <property type="entry name" value="HIG1 DOMAIN FAMILY MEMBER 1A"/>
    <property type="match status" value="1"/>
</dbReference>
<dbReference type="PANTHER" id="PTHR12297">
    <property type="entry name" value="HYPOXIA-INDUCBILE GENE 1 HIG1 -RELATED"/>
    <property type="match status" value="1"/>
</dbReference>
<dbReference type="Pfam" id="PF04588">
    <property type="entry name" value="HIG_1_N"/>
    <property type="match status" value="1"/>
</dbReference>
<dbReference type="PROSITE" id="PS51503">
    <property type="entry name" value="HIG1"/>
    <property type="match status" value="1"/>
</dbReference>
<reference key="1">
    <citation type="journal article" date="2015" name="PLoS Genet.">
        <title>The dynamic genome and transcriptome of the human fungal pathogen Blastomyces and close relative Emmonsia.</title>
        <authorList>
            <person name="Munoz J.F."/>
            <person name="Gauthier G.M."/>
            <person name="Desjardins C.A."/>
            <person name="Gallo J.E."/>
            <person name="Holder J."/>
            <person name="Sullivan T.D."/>
            <person name="Marty A.J."/>
            <person name="Carmen J.C."/>
            <person name="Chen Z."/>
            <person name="Ding L."/>
            <person name="Gujja S."/>
            <person name="Magrini V."/>
            <person name="Misas E."/>
            <person name="Mitreva M."/>
            <person name="Priest M."/>
            <person name="Saif S."/>
            <person name="Whiston E.A."/>
            <person name="Young S."/>
            <person name="Zeng Q."/>
            <person name="Goldman W.E."/>
            <person name="Mardis E.R."/>
            <person name="Taylor J.W."/>
            <person name="McEwen J.G."/>
            <person name="Clay O.K."/>
            <person name="Klein B.S."/>
            <person name="Cuomo C.A."/>
        </authorList>
    </citation>
    <scope>NUCLEOTIDE SEQUENCE [LARGE SCALE GENOMIC DNA]</scope>
    <source>
        <strain>ER-3 / ATCC MYA-2586</strain>
    </source>
</reference>
<comment type="function">
    <text evidence="1">Cytochrome c oxidase subunit which plays a role in assembly of respiratory supercomplexes.</text>
</comment>
<comment type="subunit">
    <text evidence="1">Associates with the respiratory chain complex III/complex IV supercomplex.</text>
</comment>
<comment type="subcellular location">
    <subcellularLocation>
        <location evidence="3">Mitochondrion membrane</location>
        <topology evidence="3">Multi-pass membrane protein</topology>
    </subcellularLocation>
</comment>
<comment type="similarity">
    <text evidence="4">Belongs to the RCF1 family.</text>
</comment>